<feature type="chain" id="PRO_0000226264" description="Leucine-rich repeat-containing protein 40">
    <location>
        <begin position="1"/>
        <end position="605"/>
    </location>
</feature>
<feature type="repeat" description="LRR 1">
    <location>
        <begin position="83"/>
        <end position="104"/>
    </location>
</feature>
<feature type="repeat" description="LRR 2">
    <location>
        <begin position="106"/>
        <end position="127"/>
    </location>
</feature>
<feature type="repeat" description="LRR 3">
    <location>
        <begin position="129"/>
        <end position="151"/>
    </location>
</feature>
<feature type="repeat" description="LRR 4">
    <location>
        <begin position="152"/>
        <end position="173"/>
    </location>
</feature>
<feature type="repeat" description="LRR 5">
    <location>
        <begin position="175"/>
        <end position="196"/>
    </location>
</feature>
<feature type="repeat" description="LRR 6">
    <location>
        <begin position="198"/>
        <end position="219"/>
    </location>
</feature>
<feature type="repeat" description="LRR 7">
    <location>
        <begin position="221"/>
        <end position="242"/>
    </location>
</feature>
<feature type="repeat" description="LRR 8">
    <location>
        <begin position="244"/>
        <end position="265"/>
    </location>
</feature>
<feature type="repeat" description="LRR 9">
    <location>
        <begin position="266"/>
        <end position="287"/>
    </location>
</feature>
<feature type="repeat" description="LRR 10">
    <location>
        <begin position="290"/>
        <end position="311"/>
    </location>
</feature>
<feature type="repeat" description="LRR 11">
    <location>
        <begin position="313"/>
        <end position="335"/>
    </location>
</feature>
<feature type="repeat" description="LRR 12">
    <location>
        <begin position="336"/>
        <end position="357"/>
    </location>
</feature>
<feature type="repeat" description="LRR 13">
    <location>
        <begin position="429"/>
        <end position="450"/>
    </location>
</feature>
<feature type="repeat" description="LRR 14">
    <location>
        <begin position="453"/>
        <end position="475"/>
    </location>
</feature>
<feature type="repeat" description="LRR 15">
    <location>
        <begin position="476"/>
        <end position="497"/>
    </location>
</feature>
<feature type="repeat" description="LRR 16">
    <location>
        <begin position="499"/>
        <end position="520"/>
    </location>
</feature>
<feature type="repeat" description="LRR 17">
    <location>
        <begin position="522"/>
        <end position="543"/>
    </location>
</feature>
<feature type="repeat" description="LRR 18">
    <location>
        <begin position="546"/>
        <end position="567"/>
    </location>
</feature>
<feature type="repeat" description="LRR 19">
    <location>
        <begin position="569"/>
        <end position="590"/>
    </location>
</feature>
<feature type="region of interest" description="Disordered" evidence="1">
    <location>
        <begin position="1"/>
        <end position="21"/>
    </location>
</feature>
<gene>
    <name type="primary">lrrc40</name>
</gene>
<reference key="1">
    <citation type="submission" date="2004-06" db="EMBL/GenBank/DDBJ databases">
        <authorList>
            <consortium name="NIH - Xenopus Gene Collection (XGC) project"/>
        </authorList>
    </citation>
    <scope>NUCLEOTIDE SEQUENCE [LARGE SCALE MRNA]</scope>
    <source>
        <tissue>Oocyte</tissue>
    </source>
</reference>
<sequence>MSRFKRGGKAPDPLSGFRAPKEQESAVPFGLIKAARKSGQLNLSARGLTEVPVSVWRINVDTPPEAHQNVDFGGSDRWWEQTDLTKLILASNKLQALSEDISLLPALVVLDIHDNQIASLPCAIRELTNLQKLNISHNKIKQLPNELQHLQNLKSFLLQHNQLEELPDSIGHLSILEELDVSNNCLRSVSSSVGQLTGLVKFNLSSNKLTALPTEIGKMKNLRQLDCTSNLLENVPASVAGMESLEQLYLRQNKLTYLPELPFLTKLKELHVGNNQIQTLGPEHLQNLSSLSVLELRYNKLKVLPKEISLLKGLERLDLSNNDIGSLPDTLGSLPNLKSLQLDGNPLRGIRRDILNKGTQELLKYLKGRVQTPDMTTQEAANPPDTAMTLPSDSVINAHAIMTLKTLEYCEKQASLIPEAVFNAAASSPITTVNFSKNQLTEVPARIVEMKDSVYDVNLGFNKISSISLNLCMLLKLTHLDMRNNALASLPPEMEALTRLQSIILSFNRFKHFPDVLYTIPNLETILISSNQIGSIDPIQLKKMTKLSTLDLQNNDLLQIPPALGNCESLRALHLEGNPFRNPRATILAKGTVAILEYLRSRIPT</sequence>
<accession>Q6GPJ5</accession>
<proteinExistence type="evidence at transcript level"/>
<protein>
    <recommendedName>
        <fullName>Leucine-rich repeat-containing protein 40</fullName>
    </recommendedName>
</protein>
<organism>
    <name type="scientific">Xenopus laevis</name>
    <name type="common">African clawed frog</name>
    <dbReference type="NCBI Taxonomy" id="8355"/>
    <lineage>
        <taxon>Eukaryota</taxon>
        <taxon>Metazoa</taxon>
        <taxon>Chordata</taxon>
        <taxon>Craniata</taxon>
        <taxon>Vertebrata</taxon>
        <taxon>Euteleostomi</taxon>
        <taxon>Amphibia</taxon>
        <taxon>Batrachia</taxon>
        <taxon>Anura</taxon>
        <taxon>Pipoidea</taxon>
        <taxon>Pipidae</taxon>
        <taxon>Xenopodinae</taxon>
        <taxon>Xenopus</taxon>
        <taxon>Xenopus</taxon>
    </lineage>
</organism>
<name>LRC40_XENLA</name>
<dbReference type="EMBL" id="BC073124">
    <property type="protein sequence ID" value="AAH73124.1"/>
    <property type="molecule type" value="mRNA"/>
</dbReference>
<dbReference type="RefSeq" id="NP_001085672.1">
    <property type="nucleotide sequence ID" value="NM_001092203.1"/>
</dbReference>
<dbReference type="SMR" id="Q6GPJ5"/>
<dbReference type="BioGRID" id="102261">
    <property type="interactions" value="1"/>
</dbReference>
<dbReference type="DNASU" id="444098"/>
<dbReference type="GeneID" id="444098"/>
<dbReference type="KEGG" id="xla:444098"/>
<dbReference type="AGR" id="Xenbase:XB-GENE-968694"/>
<dbReference type="CTD" id="444098"/>
<dbReference type="Xenbase" id="XB-GENE-968694">
    <property type="gene designation" value="lrrc40.L"/>
</dbReference>
<dbReference type="OMA" id="CMLHKLT"/>
<dbReference type="OrthoDB" id="660555at2759"/>
<dbReference type="CD-CODE" id="78E86D56">
    <property type="entry name" value="Mitochondrial cloud"/>
</dbReference>
<dbReference type="Proteomes" id="UP000186698">
    <property type="component" value="Chromosome 4L"/>
</dbReference>
<dbReference type="Bgee" id="444098">
    <property type="expression patterns" value="Expressed in zone of skin and 19 other cell types or tissues"/>
</dbReference>
<dbReference type="GO" id="GO:0005737">
    <property type="term" value="C:cytoplasm"/>
    <property type="evidence" value="ECO:0000318"/>
    <property type="project" value="GO_Central"/>
</dbReference>
<dbReference type="FunFam" id="3.80.10.10:FF:000116">
    <property type="entry name" value="Leucine-rich repeat-containing protein 40"/>
    <property type="match status" value="1"/>
</dbReference>
<dbReference type="FunFam" id="3.80.10.10:FF:000193">
    <property type="entry name" value="Leucine-rich repeat-containing protein 40"/>
    <property type="match status" value="1"/>
</dbReference>
<dbReference type="FunFam" id="3.80.10.10:FF:000265">
    <property type="entry name" value="Leucine-rich repeat-containing protein 40"/>
    <property type="match status" value="1"/>
</dbReference>
<dbReference type="FunFam" id="3.80.10.10:FF:000206">
    <property type="entry name" value="leucine-rich repeat-containing protein 40"/>
    <property type="match status" value="1"/>
</dbReference>
<dbReference type="Gene3D" id="3.80.10.10">
    <property type="entry name" value="Ribonuclease Inhibitor"/>
    <property type="match status" value="4"/>
</dbReference>
<dbReference type="InterPro" id="IPR001611">
    <property type="entry name" value="Leu-rich_rpt"/>
</dbReference>
<dbReference type="InterPro" id="IPR003591">
    <property type="entry name" value="Leu-rich_rpt_typical-subtyp"/>
</dbReference>
<dbReference type="InterPro" id="IPR032675">
    <property type="entry name" value="LRR_dom_sf"/>
</dbReference>
<dbReference type="InterPro" id="IPR050216">
    <property type="entry name" value="LRR_domain-containing"/>
</dbReference>
<dbReference type="PANTHER" id="PTHR48051">
    <property type="match status" value="1"/>
</dbReference>
<dbReference type="PANTHER" id="PTHR48051:SF46">
    <property type="entry name" value="LEUCINE RICH REPEAT-CONTAINING DOMAIN PROTEIN"/>
    <property type="match status" value="1"/>
</dbReference>
<dbReference type="Pfam" id="PF13855">
    <property type="entry name" value="LRR_8"/>
    <property type="match status" value="4"/>
</dbReference>
<dbReference type="SMART" id="SM00364">
    <property type="entry name" value="LRR_BAC"/>
    <property type="match status" value="10"/>
</dbReference>
<dbReference type="SMART" id="SM00365">
    <property type="entry name" value="LRR_SD22"/>
    <property type="match status" value="8"/>
</dbReference>
<dbReference type="SMART" id="SM00369">
    <property type="entry name" value="LRR_TYP"/>
    <property type="match status" value="13"/>
</dbReference>
<dbReference type="SUPFAM" id="SSF52058">
    <property type="entry name" value="L domain-like"/>
    <property type="match status" value="1"/>
</dbReference>
<dbReference type="SUPFAM" id="SSF52075">
    <property type="entry name" value="Outer arm dynein light chain 1"/>
    <property type="match status" value="1"/>
</dbReference>
<dbReference type="PROSITE" id="PS51450">
    <property type="entry name" value="LRR"/>
    <property type="match status" value="17"/>
</dbReference>
<keyword id="KW-0433">Leucine-rich repeat</keyword>
<keyword id="KW-1185">Reference proteome</keyword>
<keyword id="KW-0677">Repeat</keyword>
<evidence type="ECO:0000256" key="1">
    <source>
        <dbReference type="SAM" id="MobiDB-lite"/>
    </source>
</evidence>